<sequence>MRSRRGLLIVLSGPSGVGKGTVRKELFSHEDTRFQYSISVTTRKPREGEVDGVDYFFKEREEFEEMIRNEKLLEWAEFVGNYYGTPIDYVEKTLQEGKDVFLEIEVQGAIQVKKAFPEGVFIFLAPPSLSELKNRIVGRGTETEDVIENRLTVAKEEIDMMDAYDYVVENDQVELACERIKAIVVGEHCRRERVAKYYKEMTEGL</sequence>
<protein>
    <recommendedName>
        <fullName evidence="1">Guanylate kinase</fullName>
        <ecNumber evidence="1">2.7.4.8</ecNumber>
    </recommendedName>
    <alternativeName>
        <fullName evidence="1">GMP kinase</fullName>
    </alternativeName>
</protein>
<comment type="function">
    <text evidence="1">Essential for recycling GMP and indirectly, cGMP.</text>
</comment>
<comment type="catalytic activity">
    <reaction evidence="1">
        <text>GMP + ATP = GDP + ADP</text>
        <dbReference type="Rhea" id="RHEA:20780"/>
        <dbReference type="ChEBI" id="CHEBI:30616"/>
        <dbReference type="ChEBI" id="CHEBI:58115"/>
        <dbReference type="ChEBI" id="CHEBI:58189"/>
        <dbReference type="ChEBI" id="CHEBI:456216"/>
        <dbReference type="EC" id="2.7.4.8"/>
    </reaction>
</comment>
<comment type="subcellular location">
    <subcellularLocation>
        <location evidence="1">Cytoplasm</location>
    </subcellularLocation>
</comment>
<comment type="similarity">
    <text evidence="1">Belongs to the guanylate kinase family.</text>
</comment>
<comment type="sequence caution" evidence="2">
    <conflict type="erroneous initiation">
        <sequence resource="EMBL-CDS" id="AAU16637"/>
    </conflict>
</comment>
<organism>
    <name type="scientific">Bacillus cereus (strain ZK / E33L)</name>
    <dbReference type="NCBI Taxonomy" id="288681"/>
    <lineage>
        <taxon>Bacteria</taxon>
        <taxon>Bacillati</taxon>
        <taxon>Bacillota</taxon>
        <taxon>Bacilli</taxon>
        <taxon>Bacillales</taxon>
        <taxon>Bacillaceae</taxon>
        <taxon>Bacillus</taxon>
        <taxon>Bacillus cereus group</taxon>
    </lineage>
</organism>
<accession>Q636F5</accession>
<feature type="chain" id="PRO_0000170493" description="Guanylate kinase">
    <location>
        <begin position="1"/>
        <end position="205"/>
    </location>
</feature>
<feature type="domain" description="Guanylate kinase-like" evidence="1">
    <location>
        <begin position="6"/>
        <end position="185"/>
    </location>
</feature>
<feature type="binding site" evidence="1">
    <location>
        <begin position="13"/>
        <end position="20"/>
    </location>
    <ligand>
        <name>ATP</name>
        <dbReference type="ChEBI" id="CHEBI:30616"/>
    </ligand>
</feature>
<reference key="1">
    <citation type="journal article" date="2006" name="J. Bacteriol.">
        <title>Pathogenomic sequence analysis of Bacillus cereus and Bacillus thuringiensis isolates closely related to Bacillus anthracis.</title>
        <authorList>
            <person name="Han C.S."/>
            <person name="Xie G."/>
            <person name="Challacombe J.F."/>
            <person name="Altherr M.R."/>
            <person name="Bhotika S.S."/>
            <person name="Bruce D."/>
            <person name="Campbell C.S."/>
            <person name="Campbell M.L."/>
            <person name="Chen J."/>
            <person name="Chertkov O."/>
            <person name="Cleland C."/>
            <person name="Dimitrijevic M."/>
            <person name="Doggett N.A."/>
            <person name="Fawcett J.J."/>
            <person name="Glavina T."/>
            <person name="Goodwin L.A."/>
            <person name="Hill K.K."/>
            <person name="Hitchcock P."/>
            <person name="Jackson P.J."/>
            <person name="Keim P."/>
            <person name="Kewalramani A.R."/>
            <person name="Longmire J."/>
            <person name="Lucas S."/>
            <person name="Malfatti S."/>
            <person name="McMurry K."/>
            <person name="Meincke L.J."/>
            <person name="Misra M."/>
            <person name="Moseman B.L."/>
            <person name="Mundt M."/>
            <person name="Munk A.C."/>
            <person name="Okinaka R.T."/>
            <person name="Parson-Quintana B."/>
            <person name="Reilly L.P."/>
            <person name="Richardson P."/>
            <person name="Robinson D.L."/>
            <person name="Rubin E."/>
            <person name="Saunders E."/>
            <person name="Tapia R."/>
            <person name="Tesmer J.G."/>
            <person name="Thayer N."/>
            <person name="Thompson L.S."/>
            <person name="Tice H."/>
            <person name="Ticknor L.O."/>
            <person name="Wills P.L."/>
            <person name="Brettin T.S."/>
            <person name="Gilna P."/>
        </authorList>
    </citation>
    <scope>NUCLEOTIDE SEQUENCE [LARGE SCALE GENOMIC DNA]</scope>
    <source>
        <strain>ZK / E33L</strain>
    </source>
</reference>
<name>KGUA_BACCZ</name>
<proteinExistence type="inferred from homology"/>
<gene>
    <name evidence="1" type="primary">gmk</name>
    <name type="ordered locus">BCE33L3630</name>
</gene>
<evidence type="ECO:0000255" key="1">
    <source>
        <dbReference type="HAMAP-Rule" id="MF_00328"/>
    </source>
</evidence>
<evidence type="ECO:0000305" key="2"/>
<dbReference type="EC" id="2.7.4.8" evidence="1"/>
<dbReference type="EMBL" id="CP000001">
    <property type="protein sequence ID" value="AAU16637.1"/>
    <property type="status" value="ALT_INIT"/>
    <property type="molecule type" value="Genomic_DNA"/>
</dbReference>
<dbReference type="RefSeq" id="WP_001257738.1">
    <property type="nucleotide sequence ID" value="NZ_CP009968.1"/>
</dbReference>
<dbReference type="SMR" id="Q636F5"/>
<dbReference type="GeneID" id="93007240"/>
<dbReference type="KEGG" id="bcz:BCE33L3630"/>
<dbReference type="PATRIC" id="fig|288681.22.peg.1781"/>
<dbReference type="Proteomes" id="UP000002612">
    <property type="component" value="Chromosome"/>
</dbReference>
<dbReference type="GO" id="GO:0005829">
    <property type="term" value="C:cytosol"/>
    <property type="evidence" value="ECO:0007669"/>
    <property type="project" value="TreeGrafter"/>
</dbReference>
<dbReference type="GO" id="GO:0005524">
    <property type="term" value="F:ATP binding"/>
    <property type="evidence" value="ECO:0007669"/>
    <property type="project" value="UniProtKB-UniRule"/>
</dbReference>
<dbReference type="GO" id="GO:0004385">
    <property type="term" value="F:guanylate kinase activity"/>
    <property type="evidence" value="ECO:0007669"/>
    <property type="project" value="UniProtKB-UniRule"/>
</dbReference>
<dbReference type="CDD" id="cd00071">
    <property type="entry name" value="GMPK"/>
    <property type="match status" value="1"/>
</dbReference>
<dbReference type="FunFam" id="3.40.50.300:FF:000855">
    <property type="entry name" value="Guanylate kinase"/>
    <property type="match status" value="1"/>
</dbReference>
<dbReference type="FunFam" id="3.30.63.10:FF:000002">
    <property type="entry name" value="Guanylate kinase 1"/>
    <property type="match status" value="1"/>
</dbReference>
<dbReference type="Gene3D" id="3.30.63.10">
    <property type="entry name" value="Guanylate Kinase phosphate binding domain"/>
    <property type="match status" value="1"/>
</dbReference>
<dbReference type="Gene3D" id="3.40.50.300">
    <property type="entry name" value="P-loop containing nucleotide triphosphate hydrolases"/>
    <property type="match status" value="1"/>
</dbReference>
<dbReference type="HAMAP" id="MF_00328">
    <property type="entry name" value="Guanylate_kinase"/>
    <property type="match status" value="1"/>
</dbReference>
<dbReference type="InterPro" id="IPR008145">
    <property type="entry name" value="GK/Ca_channel_bsu"/>
</dbReference>
<dbReference type="InterPro" id="IPR008144">
    <property type="entry name" value="Guanylate_kin-like_dom"/>
</dbReference>
<dbReference type="InterPro" id="IPR017665">
    <property type="entry name" value="Guanylate_kinase"/>
</dbReference>
<dbReference type="InterPro" id="IPR020590">
    <property type="entry name" value="Guanylate_kinase_CS"/>
</dbReference>
<dbReference type="InterPro" id="IPR027417">
    <property type="entry name" value="P-loop_NTPase"/>
</dbReference>
<dbReference type="NCBIfam" id="TIGR03263">
    <property type="entry name" value="guanyl_kin"/>
    <property type="match status" value="1"/>
</dbReference>
<dbReference type="PANTHER" id="PTHR23117:SF13">
    <property type="entry name" value="GUANYLATE KINASE"/>
    <property type="match status" value="1"/>
</dbReference>
<dbReference type="PANTHER" id="PTHR23117">
    <property type="entry name" value="GUANYLATE KINASE-RELATED"/>
    <property type="match status" value="1"/>
</dbReference>
<dbReference type="Pfam" id="PF00625">
    <property type="entry name" value="Guanylate_kin"/>
    <property type="match status" value="1"/>
</dbReference>
<dbReference type="SMART" id="SM00072">
    <property type="entry name" value="GuKc"/>
    <property type="match status" value="1"/>
</dbReference>
<dbReference type="SUPFAM" id="SSF52540">
    <property type="entry name" value="P-loop containing nucleoside triphosphate hydrolases"/>
    <property type="match status" value="1"/>
</dbReference>
<dbReference type="PROSITE" id="PS00856">
    <property type="entry name" value="GUANYLATE_KINASE_1"/>
    <property type="match status" value="1"/>
</dbReference>
<dbReference type="PROSITE" id="PS50052">
    <property type="entry name" value="GUANYLATE_KINASE_2"/>
    <property type="match status" value="1"/>
</dbReference>
<keyword id="KW-0067">ATP-binding</keyword>
<keyword id="KW-0963">Cytoplasm</keyword>
<keyword id="KW-0418">Kinase</keyword>
<keyword id="KW-0547">Nucleotide-binding</keyword>
<keyword id="KW-0808">Transferase</keyword>